<sequence>MKRRLMKGISLLTLVFLIGIMLQLSLKSELTAYASSDDPYKQRFLELWEELHDPSNGYFSSHGIPYHAVETLIVEAPDYGHLTTSEAMSYYLWLEALYGKFTGDFSYFMKAWETIEKYMIPTEQDQPNRSMAGYNPAKPATYAPEWEEPSMYPSQLDFSAPVGIDPIYNELVSTYGTNTIYGMHWLLDVDNWYGFGRRADRISSPAYINTFQRGSQESVWETIPQPCWDDLTIGGRNGFLDLFVGDSQYSAQFKYTNAPDADARAIQATYWANQWAKEHGVNLSQYVKKASRMGDYLRYAMFDKYFRKIGDSKQAGTGYDAAHYLLSWYYAWGGGITADWAWIIGCSHVHAGYQNPMTAWILANDPEFKPESPNGANDWAKSLERQLEFYQWLQSAEGAIAGGATNSYKGRYETLPAGISTFYGMAYEEHPVYLDPGSNTWFGFQAWTMQRVAEYYYLTGDTRAEQLLDKWVDWIKSVVRLNSDGTFEIPGNLEWSGQPDTWTGTYTGNPNLHVSVVSYGTDLGAAGSLANALLYYAKTSGDDEARNLAKELLDRMWNLYRDDKGLSAPETREDYVRFFEQEVYVPQGWSGTMPNGDRIEPGVTFLDIRSKYLNDPDYPKLQQAYNEGKAPVFNYHRFWAQCDIAIANGLYSILFGSEQANDSFITPTSATFDKNNQEDISVTVTYNGNTLLGIKSGSSYLIEGVDYIVNGDVIIIKKEFLAGQATGSISLLFDFSAGLDRTLTIDIIDTGGGEEPVEPVEPVEGVLIIQSFNANTQEISNSIMPRFRIYNSGNTSIPLSEVKLRYYYTVDGDKPQNFWCDWASIGSSNVTGTFVKMDGATTGADYYLEIGFTPQAGTLEPGASIEVQGRFSKIDWTDYTQTNDYSFNPTASSYVDFNKITAYISGNLVYGIEP</sequence>
<gene>
    <name type="primary">celY</name>
    <name type="ordered locus">Cst_c18970</name>
</gene>
<reference key="1">
    <citation type="submission" date="1996-02" db="EMBL/GenBank/DDBJ databases">
        <authorList>
            <person name="Bronnenmeier K."/>
            <person name="Kundt K."/>
            <person name="Riedel K."/>
            <person name="Schwarz W.H."/>
            <person name="Staudenbauer W.L."/>
        </authorList>
    </citation>
    <scope>NUCLEOTIDE SEQUENCE [GENOMIC DNA]</scope>
    <source>
        <strain>ATCC 35414 / DSM 8532 / NCIMB 11754</strain>
    </source>
</reference>
<reference key="2">
    <citation type="journal article" date="2013" name="Genome Announc.">
        <title>Complete genome sequence of Clostridium stercorarium subsp. stercorarium strain DSM 8532, a thermophilic degrader of plant cell wall fibers.</title>
        <authorList>
            <person name="Poehlein A."/>
            <person name="Zverlov V.V."/>
            <person name="Daniel R."/>
            <person name="Schwarz W.H."/>
            <person name="Liebl W."/>
        </authorList>
    </citation>
    <scope>NUCLEOTIDE SEQUENCE [LARGE SCALE GENOMIC DNA]</scope>
    <source>
        <strain>ATCC 35414 / DSM 8532 / NCIMB 11754</strain>
    </source>
</reference>
<reference key="3">
    <citation type="journal article" date="1991" name="Eur. J. Biochem.">
        <title>Purification and properties of a novel type of exo-1,4-beta-glucanase (avicelase II) from the cellulolytic thermophile Clostridium stercorarium.</title>
        <authorList>
            <person name="Bronnenmeier K."/>
            <person name="Ruecknagel K.P."/>
            <person name="Staudenbauer W.L."/>
        </authorList>
    </citation>
    <scope>CHARACTERIZATION</scope>
    <source>
        <strain>ATCC 35414 / DSM 8532 / NCIMB 11754</strain>
    </source>
</reference>
<evidence type="ECO:0000255" key="1"/>
<evidence type="ECO:0000255" key="2">
    <source>
        <dbReference type="PROSITE-ProRule" id="PRU00513"/>
    </source>
</evidence>
<evidence type="ECO:0000305" key="3"/>
<comment type="catalytic activity">
    <reaction>
        <text>Hydrolysis of (1-&gt;4)-beta-D-glucosidic linkages in cellulose and cellotetraose, releasing cellobiose from the non-reducing ends of the chains.</text>
        <dbReference type="EC" id="3.2.1.91"/>
    </reaction>
</comment>
<comment type="similarity">
    <text evidence="3">Belongs to the glycosyl hydrolase 48 (cellulase L) family.</text>
</comment>
<proteinExistence type="evidence at protein level"/>
<accession>P50900</accession>
<accession>L7VQ95</accession>
<name>GUX2_THES1</name>
<dbReference type="EC" id="3.2.1.91"/>
<dbReference type="EMBL" id="Z69359">
    <property type="protein sequence ID" value="CAA93280.1"/>
    <property type="molecule type" value="Genomic_DNA"/>
</dbReference>
<dbReference type="EMBL" id="CP004044">
    <property type="protein sequence ID" value="AGC68874.1"/>
    <property type="molecule type" value="Genomic_DNA"/>
</dbReference>
<dbReference type="SMR" id="P50900"/>
<dbReference type="STRING" id="1121335.Cst_c18970"/>
<dbReference type="CAZy" id="CBM3">
    <property type="family name" value="Carbohydrate-Binding Module Family 3"/>
</dbReference>
<dbReference type="CAZy" id="GH48">
    <property type="family name" value="Glycoside Hydrolase Family 48"/>
</dbReference>
<dbReference type="KEGG" id="css:Cst_c18970"/>
<dbReference type="PATRIC" id="fig|1121335.3.peg.1896"/>
<dbReference type="eggNOG" id="COG4447">
    <property type="taxonomic scope" value="Bacteria"/>
</dbReference>
<dbReference type="eggNOG" id="COG5297">
    <property type="taxonomic scope" value="Bacteria"/>
</dbReference>
<dbReference type="BRENDA" id="3.2.1.176">
    <property type="organism ID" value="1520"/>
</dbReference>
<dbReference type="BRENDA" id="3.2.1.91">
    <property type="organism ID" value="1520"/>
</dbReference>
<dbReference type="Proteomes" id="UP000011220">
    <property type="component" value="Chromosome"/>
</dbReference>
<dbReference type="GO" id="GO:0008810">
    <property type="term" value="F:cellulase activity"/>
    <property type="evidence" value="ECO:0007669"/>
    <property type="project" value="InterPro"/>
</dbReference>
<dbReference type="GO" id="GO:0016162">
    <property type="term" value="F:cellulose 1,4-beta-cellobiosidase activity"/>
    <property type="evidence" value="ECO:0007669"/>
    <property type="project" value="UniProtKB-EC"/>
</dbReference>
<dbReference type="GO" id="GO:0030248">
    <property type="term" value="F:cellulose binding"/>
    <property type="evidence" value="ECO:0007669"/>
    <property type="project" value="InterPro"/>
</dbReference>
<dbReference type="GO" id="GO:0030245">
    <property type="term" value="P:cellulose catabolic process"/>
    <property type="evidence" value="ECO:0007669"/>
    <property type="project" value="UniProtKB-KW"/>
</dbReference>
<dbReference type="Gene3D" id="1.50.10.10">
    <property type="match status" value="1"/>
</dbReference>
<dbReference type="Gene3D" id="2.170.160.10">
    <property type="entry name" value="Endo-1,4-beta-glucanase f. Domain 2"/>
    <property type="match status" value="1"/>
</dbReference>
<dbReference type="Gene3D" id="4.10.870.10">
    <property type="entry name" value="Endo-1,4-beta-glucanase f. Domain 3"/>
    <property type="match status" value="1"/>
</dbReference>
<dbReference type="Gene3D" id="2.60.40.710">
    <property type="entry name" value="Endoglucanase-like"/>
    <property type="match status" value="1"/>
</dbReference>
<dbReference type="Gene3D" id="2.60.40.10">
    <property type="entry name" value="Immunoglobulins"/>
    <property type="match status" value="1"/>
</dbReference>
<dbReference type="InterPro" id="IPR008928">
    <property type="entry name" value="6-hairpin_glycosidase_sf"/>
</dbReference>
<dbReference type="InterPro" id="IPR012341">
    <property type="entry name" value="6hp_glycosidase-like_sf"/>
</dbReference>
<dbReference type="InterPro" id="IPR005102">
    <property type="entry name" value="Carbo-bd_X2"/>
</dbReference>
<dbReference type="InterPro" id="IPR008965">
    <property type="entry name" value="CBM2/CBM3_carb-bd_dom_sf"/>
</dbReference>
<dbReference type="InterPro" id="IPR001956">
    <property type="entry name" value="CBM3"/>
</dbReference>
<dbReference type="InterPro" id="IPR036966">
    <property type="entry name" value="CBM3_sf"/>
</dbReference>
<dbReference type="InterPro" id="IPR023309">
    <property type="entry name" value="Endo-1-4-beta-glucanase_dom2"/>
</dbReference>
<dbReference type="InterPro" id="IPR027390">
    <property type="entry name" value="Endoglucanase_F_dom3"/>
</dbReference>
<dbReference type="InterPro" id="IPR000556">
    <property type="entry name" value="Glyco_hydro_48F"/>
</dbReference>
<dbReference type="InterPro" id="IPR013783">
    <property type="entry name" value="Ig-like_fold"/>
</dbReference>
<dbReference type="InterPro" id="IPR014756">
    <property type="entry name" value="Ig_E-set"/>
</dbReference>
<dbReference type="Pfam" id="PF00942">
    <property type="entry name" value="CBM_3"/>
    <property type="match status" value="1"/>
</dbReference>
<dbReference type="Pfam" id="PF03442">
    <property type="entry name" value="CBM_X2"/>
    <property type="match status" value="1"/>
</dbReference>
<dbReference type="Pfam" id="PF02011">
    <property type="entry name" value="Glyco_hydro_48"/>
    <property type="match status" value="1"/>
</dbReference>
<dbReference type="PRINTS" id="PR00844">
    <property type="entry name" value="GLHYDRLASE48"/>
</dbReference>
<dbReference type="SMART" id="SM01067">
    <property type="entry name" value="CBM_3"/>
    <property type="match status" value="1"/>
</dbReference>
<dbReference type="SUPFAM" id="SSF49384">
    <property type="entry name" value="Carbohydrate-binding domain"/>
    <property type="match status" value="1"/>
</dbReference>
<dbReference type="SUPFAM" id="SSF81296">
    <property type="entry name" value="E set domains"/>
    <property type="match status" value="1"/>
</dbReference>
<dbReference type="SUPFAM" id="SSF48208">
    <property type="entry name" value="Six-hairpin glycosidases"/>
    <property type="match status" value="1"/>
</dbReference>
<dbReference type="PROSITE" id="PS51172">
    <property type="entry name" value="CBM3"/>
    <property type="match status" value="1"/>
</dbReference>
<protein>
    <recommendedName>
        <fullName>Exoglucanase-2</fullName>
        <ecNumber>3.2.1.91</ecNumber>
    </recommendedName>
    <alternativeName>
        <fullName>1,4-beta-cellobiohydrolase II</fullName>
    </alternativeName>
    <alternativeName>
        <fullName>Avicelase II</fullName>
    </alternativeName>
    <alternativeName>
        <fullName>Exocellobiohydrolase II</fullName>
    </alternativeName>
    <alternativeName>
        <fullName>Exoglucanase II</fullName>
    </alternativeName>
</protein>
<feature type="signal peptide" evidence="1">
    <location>
        <begin position="1"/>
        <end position="33"/>
    </location>
</feature>
<feature type="chain" id="PRO_0000008030" description="Exoglucanase-2">
    <location>
        <begin position="34"/>
        <end position="914"/>
    </location>
</feature>
<feature type="domain" description="CBM3" evidence="2">
    <location>
        <begin position="763"/>
        <end position="914"/>
    </location>
</feature>
<feature type="sequence conflict" description="In Ref. 1; CAA93280." evidence="3" ref="1">
    <original>G</original>
    <variation>R</variation>
    <location>
        <position position="520"/>
    </location>
</feature>
<keyword id="KW-0119">Carbohydrate metabolism</keyword>
<keyword id="KW-0136">Cellulose degradation</keyword>
<keyword id="KW-0326">Glycosidase</keyword>
<keyword id="KW-0378">Hydrolase</keyword>
<keyword id="KW-0624">Polysaccharide degradation</keyword>
<keyword id="KW-1185">Reference proteome</keyword>
<keyword id="KW-0732">Signal</keyword>
<organism>
    <name type="scientific">Thermoclostridium stercorarium (strain ATCC 35414 / DSM 8532 / NCIMB 11754)</name>
    <name type="common">Clostridium stercorarium</name>
    <dbReference type="NCBI Taxonomy" id="1121335"/>
    <lineage>
        <taxon>Bacteria</taxon>
        <taxon>Bacillati</taxon>
        <taxon>Bacillota</taxon>
        <taxon>Clostridia</taxon>
        <taxon>Eubacteriales</taxon>
        <taxon>Oscillospiraceae</taxon>
        <taxon>Thermoclostridium</taxon>
    </lineage>
</organism>